<name>VATE_DROME</name>
<comment type="function">
    <text evidence="1">Subunit of the V1 complex of vacuolar(H+)-ATPase (V-ATPase), a multisubunit enzyme composed of a peripheral complex (V1) that hydrolyzes ATP and a membrane integral complex (V0) that translocates protons (By similarity). V-ATPase is responsible for acidifying and maintaining the pH of intracellular compartments and in some cell types, is targeted to the plasma membrane, where it is responsible for acidifying the extracellular environment (By similarity).</text>
</comment>
<comment type="subunit">
    <text evidence="1">V-ATPase is a heteromultimeric enzyme made up of two complexes: the ATP-hydrolytic V1 complex and the proton translocation V0 complex (By similarity). The V1 complex consists of three catalytic AB heterodimers that form a heterohexamer, three peripheral stalks each consisting of EG heterodimers, one central rotor including subunits D and F, and the regulatory subunits C and H (By similarity). The proton translocation complex V0 consists of the proton transport subunit a, a ring of proteolipid subunits c9c'', rotary subunit d, subunits e and f, and the accessory subunits VhaAC45 and ATP6AP2 (By similarity).</text>
</comment>
<comment type="interaction">
    <interactant intactId="EBI-84926">
        <id>P54611</id>
    </interactant>
    <interactant intactId="EBI-86624">
        <id>Q9XZH6</id>
        <label>Vha13</label>
    </interactant>
    <organismsDiffer>false</organismsDiffer>
    <experiments>7</experiments>
</comment>
<comment type="similarity">
    <text evidence="2">Belongs to the V-ATPase E subunit family.</text>
</comment>
<dbReference type="EMBL" id="U38951">
    <property type="protein sequence ID" value="AAB09739.1"/>
    <property type="molecule type" value="Genomic_DNA"/>
</dbReference>
<dbReference type="EMBL" id="U38198">
    <property type="protein sequence ID" value="AAB09738.1"/>
    <property type="molecule type" value="mRNA"/>
</dbReference>
<dbReference type="EMBL" id="AE014297">
    <property type="protein sequence ID" value="AAF51998.1"/>
    <property type="molecule type" value="Genomic_DNA"/>
</dbReference>
<dbReference type="EMBL" id="AF145618">
    <property type="protein sequence ID" value="AAD38593.1"/>
    <property type="molecule type" value="mRNA"/>
</dbReference>
<dbReference type="RefSeq" id="NP_001287182.1">
    <property type="nucleotide sequence ID" value="NM_001300253.1"/>
</dbReference>
<dbReference type="RefSeq" id="NP_524237.1">
    <property type="nucleotide sequence ID" value="NM_079513.3"/>
</dbReference>
<dbReference type="RefSeq" id="NP_730957.1">
    <property type="nucleotide sequence ID" value="NM_169073.2"/>
</dbReference>
<dbReference type="SMR" id="P54611"/>
<dbReference type="BioGRID" id="65885">
    <property type="interactions" value="31"/>
</dbReference>
<dbReference type="DIP" id="DIP-18942N"/>
<dbReference type="FunCoup" id="P54611">
    <property type="interactions" value="1029"/>
</dbReference>
<dbReference type="IntAct" id="P54611">
    <property type="interactions" value="143"/>
</dbReference>
<dbReference type="STRING" id="7227.FBpp0311965"/>
<dbReference type="PaxDb" id="7227-FBpp0078349"/>
<dbReference type="DNASU" id="40679"/>
<dbReference type="EnsemblMetazoa" id="FBtr0078700">
    <property type="protein sequence ID" value="FBpp0078349"/>
    <property type="gene ID" value="FBgn0283535"/>
</dbReference>
<dbReference type="EnsemblMetazoa" id="FBtr0078701">
    <property type="protein sequence ID" value="FBpp0078350"/>
    <property type="gene ID" value="FBgn0283535"/>
</dbReference>
<dbReference type="EnsemblMetazoa" id="FBtr0346137">
    <property type="protein sequence ID" value="FBpp0311965"/>
    <property type="gene ID" value="FBgn0283535"/>
</dbReference>
<dbReference type="GeneID" id="40679"/>
<dbReference type="KEGG" id="dme:Dmel_CG1088"/>
<dbReference type="AGR" id="FB:FBgn0283535"/>
<dbReference type="CTD" id="40679"/>
<dbReference type="FlyBase" id="FBgn0283535">
    <property type="gene designation" value="Vha26"/>
</dbReference>
<dbReference type="VEuPathDB" id="VectorBase:FBgn0283535"/>
<dbReference type="eggNOG" id="KOG1664">
    <property type="taxonomic scope" value="Eukaryota"/>
</dbReference>
<dbReference type="GeneTree" id="ENSGT00390000002730"/>
<dbReference type="HOGENOM" id="CLU_073641_2_0_1"/>
<dbReference type="InParanoid" id="P54611"/>
<dbReference type="OMA" id="QHMMAFI"/>
<dbReference type="OrthoDB" id="10263003at2759"/>
<dbReference type="PhylomeDB" id="P54611"/>
<dbReference type="Reactome" id="R-DME-1222556">
    <property type="pathway name" value="ROS and RNS production in phagocytes"/>
</dbReference>
<dbReference type="Reactome" id="R-DME-77387">
    <property type="pathway name" value="Insulin receptor recycling"/>
</dbReference>
<dbReference type="Reactome" id="R-DME-917977">
    <property type="pathway name" value="Transferrin endocytosis and recycling"/>
</dbReference>
<dbReference type="Reactome" id="R-DME-9639288">
    <property type="pathway name" value="Amino acids regulate mTORC1"/>
</dbReference>
<dbReference type="Reactome" id="R-DME-983712">
    <property type="pathway name" value="Ion channel transport"/>
</dbReference>
<dbReference type="SignaLink" id="P54611"/>
<dbReference type="ChiTaRS" id="Vha26">
    <property type="organism name" value="fly"/>
</dbReference>
<dbReference type="GenomeRNAi" id="40679"/>
<dbReference type="PRO" id="PR:P54611"/>
<dbReference type="Proteomes" id="UP000000803">
    <property type="component" value="Chromosome 3R"/>
</dbReference>
<dbReference type="Bgee" id="FBgn0283535">
    <property type="expression patterns" value="Expressed in second segment of antenna (Drosophila) and 291 other cell types or tissues"/>
</dbReference>
<dbReference type="ExpressionAtlas" id="P54611">
    <property type="expression patterns" value="baseline and differential"/>
</dbReference>
<dbReference type="GO" id="GO:0005886">
    <property type="term" value="C:plasma membrane"/>
    <property type="evidence" value="ECO:0007005"/>
    <property type="project" value="FlyBase"/>
</dbReference>
<dbReference type="GO" id="GO:0033181">
    <property type="term" value="C:plasma membrane proton-transporting V-type ATPase complex"/>
    <property type="evidence" value="ECO:0000315"/>
    <property type="project" value="FlyBase"/>
</dbReference>
<dbReference type="GO" id="GO:0000221">
    <property type="term" value="C:vacuolar proton-transporting V-type ATPase, V1 domain"/>
    <property type="evidence" value="ECO:0000250"/>
    <property type="project" value="FlyBase"/>
</dbReference>
<dbReference type="GO" id="GO:0046961">
    <property type="term" value="F:proton-transporting ATPase activity, rotational mechanism"/>
    <property type="evidence" value="ECO:0000318"/>
    <property type="project" value="GO_Central"/>
</dbReference>
<dbReference type="GO" id="GO:0045176">
    <property type="term" value="P:apical protein localization"/>
    <property type="evidence" value="ECO:0000315"/>
    <property type="project" value="FlyBase"/>
</dbReference>
<dbReference type="GO" id="GO:0035002">
    <property type="term" value="P:liquid clearance, open tracheal system"/>
    <property type="evidence" value="ECO:0007001"/>
    <property type="project" value="FlyBase"/>
</dbReference>
<dbReference type="GO" id="GO:1902600">
    <property type="term" value="P:proton transmembrane transport"/>
    <property type="evidence" value="ECO:0000305"/>
    <property type="project" value="FlyBase"/>
</dbReference>
<dbReference type="GO" id="GO:0007430">
    <property type="term" value="P:terminal branching, open tracheal system"/>
    <property type="evidence" value="ECO:0000315"/>
    <property type="project" value="FlyBase"/>
</dbReference>
<dbReference type="FunFam" id="3.30.2320.30:FF:000001">
    <property type="entry name" value="V-type proton atpase subunit e 1"/>
    <property type="match status" value="1"/>
</dbReference>
<dbReference type="Gene3D" id="6.10.250.1620">
    <property type="match status" value="1"/>
</dbReference>
<dbReference type="Gene3D" id="3.30.2320.30">
    <property type="entry name" value="ATP synthase, E subunit, C-terminal"/>
    <property type="match status" value="1"/>
</dbReference>
<dbReference type="HAMAP" id="MF_00311">
    <property type="entry name" value="ATP_synth_E_arch"/>
    <property type="match status" value="1"/>
</dbReference>
<dbReference type="InterPro" id="IPR038495">
    <property type="entry name" value="ATPase_E_C"/>
</dbReference>
<dbReference type="InterPro" id="IPR002842">
    <property type="entry name" value="ATPase_V1_Esu"/>
</dbReference>
<dbReference type="PANTHER" id="PTHR45715">
    <property type="entry name" value="ATPASE H+-TRANSPORTING V1 SUBUNIT E1A-RELATED"/>
    <property type="match status" value="1"/>
</dbReference>
<dbReference type="Pfam" id="PF01991">
    <property type="entry name" value="vATP-synt_E"/>
    <property type="match status" value="1"/>
</dbReference>
<dbReference type="SUPFAM" id="SSF160527">
    <property type="entry name" value="V-type ATPase subunit E-like"/>
    <property type="match status" value="1"/>
</dbReference>
<proteinExistence type="evidence at protein level"/>
<accession>P54611</accession>
<accession>Q0KIB6</accession>
<accession>Q9V3K4</accession>
<keyword id="KW-0375">Hydrogen ion transport</keyword>
<keyword id="KW-0406">Ion transport</keyword>
<keyword id="KW-1185">Reference proteome</keyword>
<keyword id="KW-0813">Transport</keyword>
<feature type="chain" id="PRO_0000117298" description="V-type proton ATPase subunit E">
    <location>
        <begin position="1"/>
        <end position="226"/>
    </location>
</feature>
<evidence type="ECO:0000250" key="1">
    <source>
        <dbReference type="UniProtKB" id="P36543"/>
    </source>
</evidence>
<evidence type="ECO:0000305" key="2"/>
<protein>
    <recommendedName>
        <fullName>V-type proton ATPase subunit E</fullName>
        <shortName>V-ATPase subunit E</shortName>
    </recommendedName>
    <alternativeName>
        <fullName>V-ATPase 26 kDa subunit</fullName>
    </alternativeName>
    <alternativeName>
        <fullName>Vacuolar proton pump subunit E</fullName>
    </alternativeName>
</protein>
<gene>
    <name type="primary">Vha26</name>
    <name type="ORF">CG1088</name>
</gene>
<reference key="1">
    <citation type="journal article" date="1996" name="Biochim. Biophys. Acta">
        <title>Characterisation of vha26, the Drosophila gene for a 26 kDa E-subunit of the vacuolar ATPase.</title>
        <authorList>
            <person name="Guo Y."/>
            <person name="Wang Z."/>
            <person name="Carter A."/>
            <person name="Kaiser K."/>
            <person name="Dow J.A.T."/>
        </authorList>
    </citation>
    <scope>NUCLEOTIDE SEQUENCE [GENOMIC DNA / MRNA]</scope>
    <source>
        <strain>Oregon-R</strain>
        <tissue>Head</tissue>
    </source>
</reference>
<reference key="2">
    <citation type="journal article" date="2000" name="Science">
        <title>The genome sequence of Drosophila melanogaster.</title>
        <authorList>
            <person name="Adams M.D."/>
            <person name="Celniker S.E."/>
            <person name="Holt R.A."/>
            <person name="Evans C.A."/>
            <person name="Gocayne J.D."/>
            <person name="Amanatides P.G."/>
            <person name="Scherer S.E."/>
            <person name="Li P.W."/>
            <person name="Hoskins R.A."/>
            <person name="Galle R.F."/>
            <person name="George R.A."/>
            <person name="Lewis S.E."/>
            <person name="Richards S."/>
            <person name="Ashburner M."/>
            <person name="Henderson S.N."/>
            <person name="Sutton G.G."/>
            <person name="Wortman J.R."/>
            <person name="Yandell M.D."/>
            <person name="Zhang Q."/>
            <person name="Chen L.X."/>
            <person name="Brandon R.C."/>
            <person name="Rogers Y.-H.C."/>
            <person name="Blazej R.G."/>
            <person name="Champe M."/>
            <person name="Pfeiffer B.D."/>
            <person name="Wan K.H."/>
            <person name="Doyle C."/>
            <person name="Baxter E.G."/>
            <person name="Helt G."/>
            <person name="Nelson C.R."/>
            <person name="Miklos G.L.G."/>
            <person name="Abril J.F."/>
            <person name="Agbayani A."/>
            <person name="An H.-J."/>
            <person name="Andrews-Pfannkoch C."/>
            <person name="Baldwin D."/>
            <person name="Ballew R.M."/>
            <person name="Basu A."/>
            <person name="Baxendale J."/>
            <person name="Bayraktaroglu L."/>
            <person name="Beasley E.M."/>
            <person name="Beeson K.Y."/>
            <person name="Benos P.V."/>
            <person name="Berman B.P."/>
            <person name="Bhandari D."/>
            <person name="Bolshakov S."/>
            <person name="Borkova D."/>
            <person name="Botchan M.R."/>
            <person name="Bouck J."/>
            <person name="Brokstein P."/>
            <person name="Brottier P."/>
            <person name="Burtis K.C."/>
            <person name="Busam D.A."/>
            <person name="Butler H."/>
            <person name="Cadieu E."/>
            <person name="Center A."/>
            <person name="Chandra I."/>
            <person name="Cherry J.M."/>
            <person name="Cawley S."/>
            <person name="Dahlke C."/>
            <person name="Davenport L.B."/>
            <person name="Davies P."/>
            <person name="de Pablos B."/>
            <person name="Delcher A."/>
            <person name="Deng Z."/>
            <person name="Mays A.D."/>
            <person name="Dew I."/>
            <person name="Dietz S.M."/>
            <person name="Dodson K."/>
            <person name="Doup L.E."/>
            <person name="Downes M."/>
            <person name="Dugan-Rocha S."/>
            <person name="Dunkov B.C."/>
            <person name="Dunn P."/>
            <person name="Durbin K.J."/>
            <person name="Evangelista C.C."/>
            <person name="Ferraz C."/>
            <person name="Ferriera S."/>
            <person name="Fleischmann W."/>
            <person name="Fosler C."/>
            <person name="Gabrielian A.E."/>
            <person name="Garg N.S."/>
            <person name="Gelbart W.M."/>
            <person name="Glasser K."/>
            <person name="Glodek A."/>
            <person name="Gong F."/>
            <person name="Gorrell J.H."/>
            <person name="Gu Z."/>
            <person name="Guan P."/>
            <person name="Harris M."/>
            <person name="Harris N.L."/>
            <person name="Harvey D.A."/>
            <person name="Heiman T.J."/>
            <person name="Hernandez J.R."/>
            <person name="Houck J."/>
            <person name="Hostin D."/>
            <person name="Houston K.A."/>
            <person name="Howland T.J."/>
            <person name="Wei M.-H."/>
            <person name="Ibegwam C."/>
            <person name="Jalali M."/>
            <person name="Kalush F."/>
            <person name="Karpen G.H."/>
            <person name="Ke Z."/>
            <person name="Kennison J.A."/>
            <person name="Ketchum K.A."/>
            <person name="Kimmel B.E."/>
            <person name="Kodira C.D."/>
            <person name="Kraft C.L."/>
            <person name="Kravitz S."/>
            <person name="Kulp D."/>
            <person name="Lai Z."/>
            <person name="Lasko P."/>
            <person name="Lei Y."/>
            <person name="Levitsky A.A."/>
            <person name="Li J.H."/>
            <person name="Li Z."/>
            <person name="Liang Y."/>
            <person name="Lin X."/>
            <person name="Liu X."/>
            <person name="Mattei B."/>
            <person name="McIntosh T.C."/>
            <person name="McLeod M.P."/>
            <person name="McPherson D."/>
            <person name="Merkulov G."/>
            <person name="Milshina N.V."/>
            <person name="Mobarry C."/>
            <person name="Morris J."/>
            <person name="Moshrefi A."/>
            <person name="Mount S.M."/>
            <person name="Moy M."/>
            <person name="Murphy B."/>
            <person name="Murphy L."/>
            <person name="Muzny D.M."/>
            <person name="Nelson D.L."/>
            <person name="Nelson D.R."/>
            <person name="Nelson K.A."/>
            <person name="Nixon K."/>
            <person name="Nusskern D.R."/>
            <person name="Pacleb J.M."/>
            <person name="Palazzolo M."/>
            <person name="Pittman G.S."/>
            <person name="Pan S."/>
            <person name="Pollard J."/>
            <person name="Puri V."/>
            <person name="Reese M.G."/>
            <person name="Reinert K."/>
            <person name="Remington K."/>
            <person name="Saunders R.D.C."/>
            <person name="Scheeler F."/>
            <person name="Shen H."/>
            <person name="Shue B.C."/>
            <person name="Siden-Kiamos I."/>
            <person name="Simpson M."/>
            <person name="Skupski M.P."/>
            <person name="Smith T.J."/>
            <person name="Spier E."/>
            <person name="Spradling A.C."/>
            <person name="Stapleton M."/>
            <person name="Strong R."/>
            <person name="Sun E."/>
            <person name="Svirskas R."/>
            <person name="Tector C."/>
            <person name="Turner R."/>
            <person name="Venter E."/>
            <person name="Wang A.H."/>
            <person name="Wang X."/>
            <person name="Wang Z.-Y."/>
            <person name="Wassarman D.A."/>
            <person name="Weinstock G.M."/>
            <person name="Weissenbach J."/>
            <person name="Williams S.M."/>
            <person name="Woodage T."/>
            <person name="Worley K.C."/>
            <person name="Wu D."/>
            <person name="Yang S."/>
            <person name="Yao Q.A."/>
            <person name="Ye J."/>
            <person name="Yeh R.-F."/>
            <person name="Zaveri J.S."/>
            <person name="Zhan M."/>
            <person name="Zhang G."/>
            <person name="Zhao Q."/>
            <person name="Zheng L."/>
            <person name="Zheng X.H."/>
            <person name="Zhong F.N."/>
            <person name="Zhong W."/>
            <person name="Zhou X."/>
            <person name="Zhu S.C."/>
            <person name="Zhu X."/>
            <person name="Smith H.O."/>
            <person name="Gibbs R.A."/>
            <person name="Myers E.W."/>
            <person name="Rubin G.M."/>
            <person name="Venter J.C."/>
        </authorList>
    </citation>
    <scope>NUCLEOTIDE SEQUENCE [LARGE SCALE GENOMIC DNA]</scope>
    <source>
        <strain>Berkeley</strain>
    </source>
</reference>
<reference key="3">
    <citation type="journal article" date="2002" name="Genome Biol.">
        <title>Annotation of the Drosophila melanogaster euchromatic genome: a systematic review.</title>
        <authorList>
            <person name="Misra S."/>
            <person name="Crosby M.A."/>
            <person name="Mungall C.J."/>
            <person name="Matthews B.B."/>
            <person name="Campbell K.S."/>
            <person name="Hradecky P."/>
            <person name="Huang Y."/>
            <person name="Kaminker J.S."/>
            <person name="Millburn G.H."/>
            <person name="Prochnik S.E."/>
            <person name="Smith C.D."/>
            <person name="Tupy J.L."/>
            <person name="Whitfield E.J."/>
            <person name="Bayraktaroglu L."/>
            <person name="Berman B.P."/>
            <person name="Bettencourt B.R."/>
            <person name="Celniker S.E."/>
            <person name="de Grey A.D.N.J."/>
            <person name="Drysdale R.A."/>
            <person name="Harris N.L."/>
            <person name="Richter J."/>
            <person name="Russo S."/>
            <person name="Schroeder A.J."/>
            <person name="Shu S.Q."/>
            <person name="Stapleton M."/>
            <person name="Yamada C."/>
            <person name="Ashburner M."/>
            <person name="Gelbart W.M."/>
            <person name="Rubin G.M."/>
            <person name="Lewis S.E."/>
        </authorList>
    </citation>
    <scope>GENOME REANNOTATION</scope>
    <source>
        <strain>Berkeley</strain>
    </source>
</reference>
<reference key="4">
    <citation type="journal article" date="2000" name="Science">
        <title>A Drosophila complementary DNA resource.</title>
        <authorList>
            <person name="Rubin G.M."/>
            <person name="Hong L."/>
            <person name="Brokstein P."/>
            <person name="Evans-Holm M."/>
            <person name="Frise E."/>
            <person name="Stapleton M."/>
            <person name="Harvey D.A."/>
        </authorList>
    </citation>
    <scope>NUCLEOTIDE SEQUENCE [LARGE SCALE MRNA]</scope>
    <source>
        <strain>Berkeley</strain>
        <tissue>Head</tissue>
    </source>
</reference>
<sequence length="226" mass="26082">MALSDADVQKQIKHMMAFIEQEANEKAEEIDAKAEEEFNIEKGRLVQQQRLKIMEYYEKKEKQVELQKKIQSSNMLNQARLKVLKVREDHVSSVLDDARKRLGEVTKNQSEYETVLTKLIVQGLFQIMEPKVILRCREVDVPLVRNVLPAAVEQYKAQINQNVELFIDEKDFLSADTCGGVELLALNGRIKVPNTLESRLDLISQQLVPEIRNALFGRNVNRKFTD</sequence>
<organism>
    <name type="scientific">Drosophila melanogaster</name>
    <name type="common">Fruit fly</name>
    <dbReference type="NCBI Taxonomy" id="7227"/>
    <lineage>
        <taxon>Eukaryota</taxon>
        <taxon>Metazoa</taxon>
        <taxon>Ecdysozoa</taxon>
        <taxon>Arthropoda</taxon>
        <taxon>Hexapoda</taxon>
        <taxon>Insecta</taxon>
        <taxon>Pterygota</taxon>
        <taxon>Neoptera</taxon>
        <taxon>Endopterygota</taxon>
        <taxon>Diptera</taxon>
        <taxon>Brachycera</taxon>
        <taxon>Muscomorpha</taxon>
        <taxon>Ephydroidea</taxon>
        <taxon>Drosophilidae</taxon>
        <taxon>Drosophila</taxon>
        <taxon>Sophophora</taxon>
    </lineage>
</organism>